<dbReference type="EMBL" id="AB042240">
    <property type="protein sequence ID" value="BAB47073.1"/>
    <property type="molecule type" value="Genomic_DNA"/>
</dbReference>
<dbReference type="RefSeq" id="NP_114297.1">
    <property type="nucleotide sequence ID" value="NC_002762.1"/>
</dbReference>
<dbReference type="SMR" id="Q95H48"/>
<dbReference type="STRING" id="4565.Q95H48"/>
<dbReference type="PaxDb" id="4565-EPlTAEP00000010060"/>
<dbReference type="EnsemblPlants" id="TraesKARUn01G0034090.1">
    <property type="protein sequence ID" value="cds.TraesKARUn01G0034090.1"/>
    <property type="gene ID" value="TraesKARUn01G0034090"/>
</dbReference>
<dbReference type="EnsemblPlants" id="TraesKARUn01G0109040.1">
    <property type="protein sequence ID" value="cds.TraesKARUn01G0109040.1"/>
    <property type="gene ID" value="TraesKARUn01G0109040"/>
</dbReference>
<dbReference type="EnsemblPlants" id="TraesKARUn01G0109150.1">
    <property type="protein sequence ID" value="cds.TraesKARUn01G0109150.1"/>
    <property type="gene ID" value="TraesKARUn01G0109150"/>
</dbReference>
<dbReference type="EnsemblPlants" id="TraesKARUn01G0189750.1">
    <property type="protein sequence ID" value="cds.TraesKARUn01G0189750.1"/>
    <property type="gene ID" value="TraesKARUn01G0189750"/>
</dbReference>
<dbReference type="EnsemblPlants" id="TraesNOR1D03G00462530.1">
    <property type="protein sequence ID" value="TraesNOR1D03G00462530.1.CDS1"/>
    <property type="gene ID" value="TraesNOR1D03G00462530"/>
</dbReference>
<dbReference type="EnsemblPlants" id="TraesPARA_EIv1.0_2643560.1">
    <property type="protein sequence ID" value="TraesPARA_EIv1.0_2643560.1.CDS1"/>
    <property type="gene ID" value="TraesPARA_EIv1.0_2643560"/>
</dbReference>
<dbReference type="EnsemblPlants" id="TraesRN3A0101022300.1">
    <property type="protein sequence ID" value="TraesRN3A0101022300.1"/>
    <property type="gene ID" value="TraesRN3A0101022300"/>
</dbReference>
<dbReference type="GeneID" id="803121"/>
<dbReference type="Gramene" id="TraesKARUn01G0034090.1">
    <property type="protein sequence ID" value="cds.TraesKARUn01G0034090.1"/>
    <property type="gene ID" value="TraesKARUn01G0034090"/>
</dbReference>
<dbReference type="Gramene" id="TraesKARUn01G0109040.1">
    <property type="protein sequence ID" value="cds.TraesKARUn01G0109040.1"/>
    <property type="gene ID" value="TraesKARUn01G0109040"/>
</dbReference>
<dbReference type="Gramene" id="TraesKARUn01G0109150.1">
    <property type="protein sequence ID" value="cds.TraesKARUn01G0109150.1"/>
    <property type="gene ID" value="TraesKARUn01G0109150"/>
</dbReference>
<dbReference type="Gramene" id="TraesKARUn01G0189750.1">
    <property type="protein sequence ID" value="cds.TraesKARUn01G0189750.1"/>
    <property type="gene ID" value="TraesKARUn01G0189750"/>
</dbReference>
<dbReference type="Gramene" id="TraesNOR1D03G00462530.1">
    <property type="protein sequence ID" value="TraesNOR1D03G00462530.1.CDS1"/>
    <property type="gene ID" value="TraesNOR1D03G00462530"/>
</dbReference>
<dbReference type="Gramene" id="TraesPARA_EIv1.0_2643560.1">
    <property type="protein sequence ID" value="TraesPARA_EIv1.0_2643560.1.CDS1"/>
    <property type="gene ID" value="TraesPARA_EIv1.0_2643560"/>
</dbReference>
<dbReference type="Gramene" id="TraesRN3A0101022300.1">
    <property type="protein sequence ID" value="TraesRN3A0101022300.1"/>
    <property type="gene ID" value="TraesRN3A0101022300"/>
</dbReference>
<dbReference type="KEGG" id="taes:803121"/>
<dbReference type="eggNOG" id="KOG1711">
    <property type="taxonomic scope" value="Eukaryota"/>
</dbReference>
<dbReference type="HOGENOM" id="CLU_1878437_0_0_1"/>
<dbReference type="OMA" id="KRIQPRA"/>
<dbReference type="Proteomes" id="UP000019116">
    <property type="component" value="Chloroplast"/>
</dbReference>
<dbReference type="ExpressionAtlas" id="Q95H48">
    <property type="expression patterns" value="baseline"/>
</dbReference>
<dbReference type="GO" id="GO:0009507">
    <property type="term" value="C:chloroplast"/>
    <property type="evidence" value="ECO:0007669"/>
    <property type="project" value="UniProtKB-SubCell"/>
</dbReference>
<dbReference type="GO" id="GO:0015934">
    <property type="term" value="C:large ribosomal subunit"/>
    <property type="evidence" value="ECO:0000318"/>
    <property type="project" value="GO_Central"/>
</dbReference>
<dbReference type="GO" id="GO:0019843">
    <property type="term" value="F:rRNA binding"/>
    <property type="evidence" value="ECO:0007669"/>
    <property type="project" value="UniProtKB-UniRule"/>
</dbReference>
<dbReference type="GO" id="GO:0003735">
    <property type="term" value="F:structural constituent of ribosome"/>
    <property type="evidence" value="ECO:0000318"/>
    <property type="project" value="GO_Central"/>
</dbReference>
<dbReference type="GO" id="GO:0006412">
    <property type="term" value="P:translation"/>
    <property type="evidence" value="ECO:0000318"/>
    <property type="project" value="GO_Central"/>
</dbReference>
<dbReference type="CDD" id="cd00336">
    <property type="entry name" value="Ribosomal_L22"/>
    <property type="match status" value="1"/>
</dbReference>
<dbReference type="FunFam" id="3.90.470.10:FF:000004">
    <property type="entry name" value="50S ribosomal protein L22, chloroplastic"/>
    <property type="match status" value="1"/>
</dbReference>
<dbReference type="Gene3D" id="3.90.470.10">
    <property type="entry name" value="Ribosomal protein L22/L17"/>
    <property type="match status" value="1"/>
</dbReference>
<dbReference type="HAMAP" id="MF_01331_B">
    <property type="entry name" value="Ribosomal_uL22_B"/>
    <property type="match status" value="1"/>
</dbReference>
<dbReference type="InterPro" id="IPR001063">
    <property type="entry name" value="Ribosomal_uL22"/>
</dbReference>
<dbReference type="InterPro" id="IPR005727">
    <property type="entry name" value="Ribosomal_uL22_bac/chlpt-type"/>
</dbReference>
<dbReference type="InterPro" id="IPR047867">
    <property type="entry name" value="Ribosomal_uL22_bac/org-type"/>
</dbReference>
<dbReference type="InterPro" id="IPR018260">
    <property type="entry name" value="Ribosomal_uL22_CS"/>
</dbReference>
<dbReference type="InterPro" id="IPR036394">
    <property type="entry name" value="Ribosomal_uL22_sf"/>
</dbReference>
<dbReference type="NCBIfam" id="TIGR01044">
    <property type="entry name" value="rplV_bact"/>
    <property type="match status" value="1"/>
</dbReference>
<dbReference type="PANTHER" id="PTHR13501">
    <property type="entry name" value="CHLOROPLAST 50S RIBOSOMAL PROTEIN L22-RELATED"/>
    <property type="match status" value="1"/>
</dbReference>
<dbReference type="PANTHER" id="PTHR13501:SF10">
    <property type="entry name" value="LARGE RIBOSOMAL SUBUNIT PROTEIN UL22M"/>
    <property type="match status" value="1"/>
</dbReference>
<dbReference type="Pfam" id="PF00237">
    <property type="entry name" value="Ribosomal_L22"/>
    <property type="match status" value="1"/>
</dbReference>
<dbReference type="SUPFAM" id="SSF54843">
    <property type="entry name" value="Ribosomal protein L22"/>
    <property type="match status" value="1"/>
</dbReference>
<dbReference type="PROSITE" id="PS00464">
    <property type="entry name" value="RIBOSOMAL_L22"/>
    <property type="match status" value="1"/>
</dbReference>
<gene>
    <name type="primary">rpl22</name>
</gene>
<proteinExistence type="inferred from homology"/>
<accession>Q95H48</accession>
<keyword id="KW-0150">Chloroplast</keyword>
<keyword id="KW-0934">Plastid</keyword>
<keyword id="KW-1185">Reference proteome</keyword>
<keyword id="KW-0687">Ribonucleoprotein</keyword>
<keyword id="KW-0689">Ribosomal protein</keyword>
<keyword id="KW-0694">RNA-binding</keyword>
<keyword id="KW-0699">rRNA-binding</keyword>
<sequence>MTSFKLVKYIPRIKKKKSGLRKLARKVPTDRLLKFERVFKAQKRIPMSVFKAQRVLDEIRWRYYEETVMILNLMPYRASYPILKLVYSAAANATHYRDFDKANLFITKAEVSRSTIMKKFRPRARGRSFPIKKSMCHITIVLNIVKKS</sequence>
<name>RK22_WHEAT</name>
<reference key="1">
    <citation type="journal article" date="2000" name="Plant Mol. Biol. Rep.">
        <title>Chinese spring wheat (Triticum aestivum L.) chloroplast genome: complete sequence and contig clones.</title>
        <authorList>
            <person name="Ogihara Y."/>
            <person name="Isono K."/>
            <person name="Kojima T."/>
            <person name="Endo A."/>
            <person name="Hanaoka M."/>
            <person name="Shiina T."/>
            <person name="Terachi T."/>
            <person name="Utsugi S."/>
            <person name="Murata M."/>
            <person name="Mori N."/>
            <person name="Takumi S."/>
            <person name="Ikeo K."/>
            <person name="Gojobori T."/>
            <person name="Murai R."/>
            <person name="Murai K."/>
            <person name="Matsuoka Y."/>
            <person name="Ohnishi Y."/>
            <person name="Tajiri H."/>
            <person name="Tsunewaki K."/>
        </authorList>
    </citation>
    <scope>NUCLEOTIDE SEQUENCE [LARGE SCALE GENOMIC DNA]</scope>
    <source>
        <strain>cv. Chinese Spring</strain>
    </source>
</reference>
<organism>
    <name type="scientific">Triticum aestivum</name>
    <name type="common">Wheat</name>
    <dbReference type="NCBI Taxonomy" id="4565"/>
    <lineage>
        <taxon>Eukaryota</taxon>
        <taxon>Viridiplantae</taxon>
        <taxon>Streptophyta</taxon>
        <taxon>Embryophyta</taxon>
        <taxon>Tracheophyta</taxon>
        <taxon>Spermatophyta</taxon>
        <taxon>Magnoliopsida</taxon>
        <taxon>Liliopsida</taxon>
        <taxon>Poales</taxon>
        <taxon>Poaceae</taxon>
        <taxon>BOP clade</taxon>
        <taxon>Pooideae</taxon>
        <taxon>Triticodae</taxon>
        <taxon>Triticeae</taxon>
        <taxon>Triticinae</taxon>
        <taxon>Triticum</taxon>
    </lineage>
</organism>
<evidence type="ECO:0000250" key="1"/>
<evidence type="ECO:0000305" key="2"/>
<feature type="chain" id="PRO_0000125330" description="Large ribosomal subunit protein uL22c">
    <location>
        <begin position="1"/>
        <end position="148"/>
    </location>
</feature>
<protein>
    <recommendedName>
        <fullName evidence="2">Large ribosomal subunit protein uL22c</fullName>
    </recommendedName>
    <alternativeName>
        <fullName>50S ribosomal protein L22, chloroplastic</fullName>
    </alternativeName>
</protein>
<geneLocation type="chloroplast"/>
<comment type="function">
    <text evidence="1">This protein binds specifically to 23S rRNA.</text>
</comment>
<comment type="function">
    <text evidence="1">The globular domain of the protein is located near the polypeptide exit tunnel on the outside of the subunit, while an extended beta-hairpin is found that lines the wall of the exit tunnel in the center of the 70S ribosome.</text>
</comment>
<comment type="subunit">
    <text evidence="1">Part of the 50S ribosomal subunit.</text>
</comment>
<comment type="subcellular location">
    <subcellularLocation>
        <location>Plastid</location>
        <location>Chloroplast</location>
    </subcellularLocation>
</comment>
<comment type="similarity">
    <text evidence="2">Belongs to the universal ribosomal protein uL22 family.</text>
</comment>